<dbReference type="EC" id="2.4.1.16"/>
<dbReference type="EMBL" id="M82960">
    <property type="protein sequence ID" value="AAC05300.1"/>
    <property type="molecule type" value="Genomic_DNA"/>
</dbReference>
<dbReference type="PIR" id="B45188">
    <property type="entry name" value="B45188"/>
</dbReference>
<dbReference type="SMR" id="P30603"/>
<dbReference type="CAZy" id="GT2">
    <property type="family name" value="Glycosyltransferase Family 2"/>
</dbReference>
<dbReference type="GO" id="GO:0030428">
    <property type="term" value="C:cell septum"/>
    <property type="evidence" value="ECO:0007669"/>
    <property type="project" value="TreeGrafter"/>
</dbReference>
<dbReference type="GO" id="GO:0005886">
    <property type="term" value="C:plasma membrane"/>
    <property type="evidence" value="ECO:0007669"/>
    <property type="project" value="UniProtKB-SubCell"/>
</dbReference>
<dbReference type="GO" id="GO:0004100">
    <property type="term" value="F:chitin synthase activity"/>
    <property type="evidence" value="ECO:0007669"/>
    <property type="project" value="UniProtKB-EC"/>
</dbReference>
<dbReference type="GO" id="GO:0071555">
    <property type="term" value="P:cell wall organization"/>
    <property type="evidence" value="ECO:0007669"/>
    <property type="project" value="UniProtKB-KW"/>
</dbReference>
<dbReference type="GO" id="GO:0006031">
    <property type="term" value="P:chitin biosynthetic process"/>
    <property type="evidence" value="ECO:0007669"/>
    <property type="project" value="InterPro"/>
</dbReference>
<dbReference type="InterPro" id="IPR004835">
    <property type="entry name" value="Chitin_synth"/>
</dbReference>
<dbReference type="InterPro" id="IPR004834">
    <property type="entry name" value="Chitin_synth_fun"/>
</dbReference>
<dbReference type="PANTHER" id="PTHR22914">
    <property type="entry name" value="CHITIN SYNTHASE"/>
    <property type="match status" value="1"/>
</dbReference>
<dbReference type="PANTHER" id="PTHR22914:SF9">
    <property type="entry name" value="CHITIN SYNTHASE 1"/>
    <property type="match status" value="1"/>
</dbReference>
<dbReference type="Pfam" id="PF01644">
    <property type="entry name" value="Chitin_synth_1"/>
    <property type="match status" value="1"/>
</dbReference>
<sequence>DFLFARTMIGVFKNIEIMCNKGSSQTWGKEAWKKIVVCIVSDRRAKINPRTRAVLAGLGVYQDGIAKQQVNGKDVTAHIYEYTTQVGIDLKGTQVSLRPKGATPVQLLFCLKEKIRRKINSHRWFFQAFGRVLDPNICVLIDAGTKPGKDSIYHLWKAFDLEPMIGGACGEIKVMLEHGKKLYNPLVAT</sequence>
<protein>
    <recommendedName>
        <fullName>Chitin synthase 1</fullName>
        <ecNumber>2.4.1.16</ecNumber>
    </recommendedName>
    <alternativeName>
        <fullName>Chitin-UDP acetyl-glucosaminyl transferase 1</fullName>
    </alternativeName>
</protein>
<proteinExistence type="inferred from homology"/>
<keyword id="KW-1003">Cell membrane</keyword>
<keyword id="KW-0961">Cell wall biogenesis/degradation</keyword>
<keyword id="KW-0328">Glycosyltransferase</keyword>
<keyword id="KW-0472">Membrane</keyword>
<keyword id="KW-0808">Transferase</keyword>
<keyword id="KW-0812">Transmembrane</keyword>
<accession>P30603</accession>
<feature type="chain" id="PRO_0000193725" description="Chitin synthase 1">
    <location>
        <begin position="1" status="less than"/>
        <end position="189" status="greater than"/>
    </location>
</feature>
<feature type="non-terminal residue">
    <location>
        <position position="1"/>
    </location>
</feature>
<feature type="non-terminal residue">
    <location>
        <position position="189"/>
    </location>
</feature>
<evidence type="ECO:0000305" key="1"/>
<name>CHS1_XYLBA</name>
<organism>
    <name type="scientific">Xylohypha bantiana</name>
    <dbReference type="NCBI Taxonomy" id="89940"/>
    <lineage>
        <taxon>Eukaryota</taxon>
        <taxon>Fungi</taxon>
        <taxon>Dikarya</taxon>
        <taxon>Ascomycota</taxon>
        <taxon>Pezizomycotina</taxon>
        <taxon>Eurotiomycetes</taxon>
        <taxon>Chaetothyriomycetidae</taxon>
        <taxon>Chaetothyriales</taxon>
        <taxon>Herpotrichiellaceae</taxon>
        <taxon>Cladophialophora</taxon>
    </lineage>
</organism>
<reference key="1">
    <citation type="journal article" date="1992" name="Proc. Natl. Acad. Sci. U.S.A.">
        <title>Classification of fungal chitin synthases.</title>
        <authorList>
            <person name="Bowen A.R."/>
            <person name="Chen-Wu J.L.-P."/>
            <person name="Momany M."/>
            <person name="Young R."/>
            <person name="Szaniszlo P.J."/>
            <person name="Robbins P.W."/>
        </authorList>
    </citation>
    <scope>NUCLEOTIDE SEQUENCE [GENOMIC DNA]</scope>
</reference>
<comment type="function">
    <text evidence="1">Polymerizes chitin, a structural polymer of the cell wall and septum, by transferring the sugar moiety of UDP-GlcNAc to the non-reducing end of the growing chitin polymer.</text>
</comment>
<comment type="catalytic activity">
    <reaction>
        <text>[(1-&gt;4)-N-acetyl-beta-D-glucosaminyl](n) + UDP-N-acetyl-alpha-D-glucosamine = [(1-&gt;4)-N-acetyl-beta-D-glucosaminyl](n+1) + UDP + H(+)</text>
        <dbReference type="Rhea" id="RHEA:16637"/>
        <dbReference type="Rhea" id="RHEA-COMP:9593"/>
        <dbReference type="Rhea" id="RHEA-COMP:9595"/>
        <dbReference type="ChEBI" id="CHEBI:15378"/>
        <dbReference type="ChEBI" id="CHEBI:17029"/>
        <dbReference type="ChEBI" id="CHEBI:57705"/>
        <dbReference type="ChEBI" id="CHEBI:58223"/>
        <dbReference type="EC" id="2.4.1.16"/>
    </reaction>
</comment>
<comment type="subcellular location">
    <subcellularLocation>
        <location evidence="1">Cell membrane</location>
        <topology evidence="1">Multi-pass membrane protein</topology>
    </subcellularLocation>
</comment>
<comment type="similarity">
    <text evidence="1">Belongs to the chitin synthase family.</text>
</comment>
<gene>
    <name type="primary">CHS1</name>
</gene>